<accession>Q7VGY9</accession>
<sequence length="369" mass="42014">MNIDFPFQQPSLYGYKLNELKSILSPAFRAKQIYHWLYHRYENDAMRMDNISKTMQNYIREHFALSQIYPIRVEHSIDGSKKYLFETYDGHCFESVLIQMRDKKLGHKGEVVESEKWTMCLSSQIGCKVGCAFCFTAKGGFVRNLHASEIVEQVVIMKKDNQMAPHKRVNIVYMGMGEPLDNIENVTRAIEILSESEGLSISARRQTISTSGIAPKIKQLGKLNLGVQLAISLHAVDDKLRSQLIPMNKAYNISDILTEVRAFPIDTRKKVMFEYLMIKGVNDDLKSAKKLLQLLNGIKAKVNLILFNPHEGSTFKRPEINDVRAFADFLIKRGLLCTIRESRGIDISAACGQLREKVKAENVSCETLT</sequence>
<name>RLMN_HELHP</name>
<protein>
    <recommendedName>
        <fullName evidence="1">Dual-specificity RNA methyltransferase RlmN</fullName>
        <ecNumber evidence="1">2.1.1.192</ecNumber>
    </recommendedName>
    <alternativeName>
        <fullName evidence="1">23S rRNA (adenine(2503)-C(2))-methyltransferase</fullName>
    </alternativeName>
    <alternativeName>
        <fullName evidence="1">23S rRNA m2A2503 methyltransferase</fullName>
    </alternativeName>
    <alternativeName>
        <fullName evidence="1">Ribosomal RNA large subunit methyltransferase N</fullName>
    </alternativeName>
    <alternativeName>
        <fullName evidence="1">tRNA (adenine(37)-C(2))-methyltransferase</fullName>
    </alternativeName>
    <alternativeName>
        <fullName evidence="1">tRNA m2A37 methyltransferase</fullName>
    </alternativeName>
</protein>
<proteinExistence type="inferred from homology"/>
<comment type="function">
    <text evidence="1">Specifically methylates position 2 of adenine 2503 in 23S rRNA and position 2 of adenine 37 in tRNAs. m2A2503 modification seems to play a crucial role in the proofreading step occurring at the peptidyl transferase center and thus would serve to optimize ribosomal fidelity.</text>
</comment>
<comment type="catalytic activity">
    <reaction evidence="1">
        <text>adenosine(2503) in 23S rRNA + 2 reduced [2Fe-2S]-[ferredoxin] + 2 S-adenosyl-L-methionine = 2-methyladenosine(2503) in 23S rRNA + 5'-deoxyadenosine + L-methionine + 2 oxidized [2Fe-2S]-[ferredoxin] + S-adenosyl-L-homocysteine</text>
        <dbReference type="Rhea" id="RHEA:42916"/>
        <dbReference type="Rhea" id="RHEA-COMP:10000"/>
        <dbReference type="Rhea" id="RHEA-COMP:10001"/>
        <dbReference type="Rhea" id="RHEA-COMP:10152"/>
        <dbReference type="Rhea" id="RHEA-COMP:10282"/>
        <dbReference type="ChEBI" id="CHEBI:17319"/>
        <dbReference type="ChEBI" id="CHEBI:33737"/>
        <dbReference type="ChEBI" id="CHEBI:33738"/>
        <dbReference type="ChEBI" id="CHEBI:57844"/>
        <dbReference type="ChEBI" id="CHEBI:57856"/>
        <dbReference type="ChEBI" id="CHEBI:59789"/>
        <dbReference type="ChEBI" id="CHEBI:74411"/>
        <dbReference type="ChEBI" id="CHEBI:74497"/>
        <dbReference type="EC" id="2.1.1.192"/>
    </reaction>
</comment>
<comment type="catalytic activity">
    <reaction evidence="1">
        <text>adenosine(37) in tRNA + 2 reduced [2Fe-2S]-[ferredoxin] + 2 S-adenosyl-L-methionine = 2-methyladenosine(37) in tRNA + 5'-deoxyadenosine + L-methionine + 2 oxidized [2Fe-2S]-[ferredoxin] + S-adenosyl-L-homocysteine</text>
        <dbReference type="Rhea" id="RHEA:43332"/>
        <dbReference type="Rhea" id="RHEA-COMP:10000"/>
        <dbReference type="Rhea" id="RHEA-COMP:10001"/>
        <dbReference type="Rhea" id="RHEA-COMP:10162"/>
        <dbReference type="Rhea" id="RHEA-COMP:10485"/>
        <dbReference type="ChEBI" id="CHEBI:17319"/>
        <dbReference type="ChEBI" id="CHEBI:33737"/>
        <dbReference type="ChEBI" id="CHEBI:33738"/>
        <dbReference type="ChEBI" id="CHEBI:57844"/>
        <dbReference type="ChEBI" id="CHEBI:57856"/>
        <dbReference type="ChEBI" id="CHEBI:59789"/>
        <dbReference type="ChEBI" id="CHEBI:74411"/>
        <dbReference type="ChEBI" id="CHEBI:74497"/>
        <dbReference type="EC" id="2.1.1.192"/>
    </reaction>
</comment>
<comment type="cofactor">
    <cofactor evidence="1">
        <name>[4Fe-4S] cluster</name>
        <dbReference type="ChEBI" id="CHEBI:49883"/>
    </cofactor>
    <text evidence="1">Binds 1 [4Fe-4S] cluster. The cluster is coordinated with 3 cysteines and an exchangeable S-adenosyl-L-methionine.</text>
</comment>
<comment type="subcellular location">
    <subcellularLocation>
        <location evidence="1">Cytoplasm</location>
    </subcellularLocation>
</comment>
<comment type="miscellaneous">
    <text evidence="1">Reaction proceeds by a ping-pong mechanism involving intermediate methylation of a conserved cysteine residue.</text>
</comment>
<comment type="similarity">
    <text evidence="1">Belongs to the radical SAM superfamily. RlmN family.</text>
</comment>
<reference key="1">
    <citation type="journal article" date="2003" name="Proc. Natl. Acad. Sci. U.S.A.">
        <title>The complete genome sequence of the carcinogenic bacterium Helicobacter hepaticus.</title>
        <authorList>
            <person name="Suerbaum S."/>
            <person name="Josenhans C."/>
            <person name="Sterzenbach T."/>
            <person name="Drescher B."/>
            <person name="Brandt P."/>
            <person name="Bell M."/>
            <person name="Droege M."/>
            <person name="Fartmann B."/>
            <person name="Fischer H.-P."/>
            <person name="Ge Z."/>
            <person name="Hoerster A."/>
            <person name="Holland R."/>
            <person name="Klein K."/>
            <person name="Koenig J."/>
            <person name="Macko L."/>
            <person name="Mendz G.L."/>
            <person name="Nyakatura G."/>
            <person name="Schauer D.B."/>
            <person name="Shen Z."/>
            <person name="Weber J."/>
            <person name="Frosch M."/>
            <person name="Fox J.G."/>
        </authorList>
    </citation>
    <scope>NUCLEOTIDE SEQUENCE [LARGE SCALE GENOMIC DNA]</scope>
    <source>
        <strain>ATCC 51449 / 3B1</strain>
    </source>
</reference>
<dbReference type="EC" id="2.1.1.192" evidence="1"/>
<dbReference type="EMBL" id="AE017125">
    <property type="protein sequence ID" value="AAP77775.1"/>
    <property type="molecule type" value="Genomic_DNA"/>
</dbReference>
<dbReference type="RefSeq" id="WP_011116018.1">
    <property type="nucleotide sequence ID" value="NC_004917.1"/>
</dbReference>
<dbReference type="SMR" id="Q7VGY9"/>
<dbReference type="STRING" id="235279.HH_1178"/>
<dbReference type="KEGG" id="hhe:HH_1178"/>
<dbReference type="eggNOG" id="COG0820">
    <property type="taxonomic scope" value="Bacteria"/>
</dbReference>
<dbReference type="HOGENOM" id="CLU_029101_2_0_7"/>
<dbReference type="OrthoDB" id="9793973at2"/>
<dbReference type="Proteomes" id="UP000002495">
    <property type="component" value="Chromosome"/>
</dbReference>
<dbReference type="GO" id="GO:0005737">
    <property type="term" value="C:cytoplasm"/>
    <property type="evidence" value="ECO:0007669"/>
    <property type="project" value="UniProtKB-SubCell"/>
</dbReference>
<dbReference type="GO" id="GO:0051539">
    <property type="term" value="F:4 iron, 4 sulfur cluster binding"/>
    <property type="evidence" value="ECO:0007669"/>
    <property type="project" value="UniProtKB-UniRule"/>
</dbReference>
<dbReference type="GO" id="GO:0046872">
    <property type="term" value="F:metal ion binding"/>
    <property type="evidence" value="ECO:0007669"/>
    <property type="project" value="UniProtKB-KW"/>
</dbReference>
<dbReference type="GO" id="GO:0070040">
    <property type="term" value="F:rRNA (adenine(2503)-C2-)-methyltransferase activity"/>
    <property type="evidence" value="ECO:0007669"/>
    <property type="project" value="UniProtKB-UniRule"/>
</dbReference>
<dbReference type="GO" id="GO:0019843">
    <property type="term" value="F:rRNA binding"/>
    <property type="evidence" value="ECO:0007669"/>
    <property type="project" value="UniProtKB-UniRule"/>
</dbReference>
<dbReference type="GO" id="GO:0002935">
    <property type="term" value="F:tRNA (adenine(37)-C2)-methyltransferase activity"/>
    <property type="evidence" value="ECO:0007669"/>
    <property type="project" value="UniProtKB-UniRule"/>
</dbReference>
<dbReference type="GO" id="GO:0000049">
    <property type="term" value="F:tRNA binding"/>
    <property type="evidence" value="ECO:0007669"/>
    <property type="project" value="UniProtKB-UniRule"/>
</dbReference>
<dbReference type="GO" id="GO:0070475">
    <property type="term" value="P:rRNA base methylation"/>
    <property type="evidence" value="ECO:0007669"/>
    <property type="project" value="UniProtKB-UniRule"/>
</dbReference>
<dbReference type="GO" id="GO:0030488">
    <property type="term" value="P:tRNA methylation"/>
    <property type="evidence" value="ECO:0007669"/>
    <property type="project" value="UniProtKB-UniRule"/>
</dbReference>
<dbReference type="CDD" id="cd01335">
    <property type="entry name" value="Radical_SAM"/>
    <property type="match status" value="1"/>
</dbReference>
<dbReference type="FunFam" id="3.20.20.70:FF:000014">
    <property type="entry name" value="Probable dual-specificity RNA methyltransferase RlmN"/>
    <property type="match status" value="1"/>
</dbReference>
<dbReference type="Gene3D" id="1.10.150.530">
    <property type="match status" value="1"/>
</dbReference>
<dbReference type="Gene3D" id="3.20.20.70">
    <property type="entry name" value="Aldolase class I"/>
    <property type="match status" value="1"/>
</dbReference>
<dbReference type="HAMAP" id="MF_01849">
    <property type="entry name" value="RNA_methyltr_RlmN"/>
    <property type="match status" value="1"/>
</dbReference>
<dbReference type="InterPro" id="IPR013785">
    <property type="entry name" value="Aldolase_TIM"/>
</dbReference>
<dbReference type="InterPro" id="IPR040072">
    <property type="entry name" value="Methyltransferase_A"/>
</dbReference>
<dbReference type="InterPro" id="IPR048641">
    <property type="entry name" value="RlmN_N"/>
</dbReference>
<dbReference type="InterPro" id="IPR027492">
    <property type="entry name" value="RNA_MTrfase_RlmN"/>
</dbReference>
<dbReference type="InterPro" id="IPR004383">
    <property type="entry name" value="rRNA_lsu_MTrfase_RlmN/Cfr"/>
</dbReference>
<dbReference type="InterPro" id="IPR007197">
    <property type="entry name" value="rSAM"/>
</dbReference>
<dbReference type="NCBIfam" id="TIGR00048">
    <property type="entry name" value="rRNA_mod_RlmN"/>
    <property type="match status" value="1"/>
</dbReference>
<dbReference type="PANTHER" id="PTHR30544">
    <property type="entry name" value="23S RRNA METHYLTRANSFERASE"/>
    <property type="match status" value="1"/>
</dbReference>
<dbReference type="PANTHER" id="PTHR30544:SF5">
    <property type="entry name" value="RADICAL SAM CORE DOMAIN-CONTAINING PROTEIN"/>
    <property type="match status" value="1"/>
</dbReference>
<dbReference type="Pfam" id="PF04055">
    <property type="entry name" value="Radical_SAM"/>
    <property type="match status" value="1"/>
</dbReference>
<dbReference type="Pfam" id="PF21016">
    <property type="entry name" value="RlmN_N"/>
    <property type="match status" value="1"/>
</dbReference>
<dbReference type="PIRSF" id="PIRSF006004">
    <property type="entry name" value="CHP00048"/>
    <property type="match status" value="1"/>
</dbReference>
<dbReference type="SFLD" id="SFLDF00275">
    <property type="entry name" value="adenosine_C2_methyltransferase"/>
    <property type="match status" value="1"/>
</dbReference>
<dbReference type="SFLD" id="SFLDS00029">
    <property type="entry name" value="Radical_SAM"/>
    <property type="match status" value="1"/>
</dbReference>
<dbReference type="SUPFAM" id="SSF102114">
    <property type="entry name" value="Radical SAM enzymes"/>
    <property type="match status" value="1"/>
</dbReference>
<dbReference type="PROSITE" id="PS51918">
    <property type="entry name" value="RADICAL_SAM"/>
    <property type="match status" value="1"/>
</dbReference>
<feature type="chain" id="PRO_0000350209" description="Dual-specificity RNA methyltransferase RlmN">
    <location>
        <begin position="1"/>
        <end position="369"/>
    </location>
</feature>
<feature type="domain" description="Radical SAM core" evidence="2">
    <location>
        <begin position="113"/>
        <end position="346"/>
    </location>
</feature>
<feature type="active site" description="Proton acceptor" evidence="1">
    <location>
        <position position="94"/>
    </location>
</feature>
<feature type="active site" description="S-methylcysteine intermediate" evidence="1">
    <location>
        <position position="351"/>
    </location>
</feature>
<feature type="binding site" evidence="1">
    <location>
        <position position="127"/>
    </location>
    <ligand>
        <name>[4Fe-4S] cluster</name>
        <dbReference type="ChEBI" id="CHEBI:49883"/>
        <note>4Fe-4S-S-AdoMet</note>
    </ligand>
</feature>
<feature type="binding site" evidence="1">
    <location>
        <position position="131"/>
    </location>
    <ligand>
        <name>[4Fe-4S] cluster</name>
        <dbReference type="ChEBI" id="CHEBI:49883"/>
        <note>4Fe-4S-S-AdoMet</note>
    </ligand>
</feature>
<feature type="binding site" evidence="1">
    <location>
        <position position="134"/>
    </location>
    <ligand>
        <name>[4Fe-4S] cluster</name>
        <dbReference type="ChEBI" id="CHEBI:49883"/>
        <note>4Fe-4S-S-AdoMet</note>
    </ligand>
</feature>
<feature type="binding site" evidence="1">
    <location>
        <begin position="177"/>
        <end position="178"/>
    </location>
    <ligand>
        <name>S-adenosyl-L-methionine</name>
        <dbReference type="ChEBI" id="CHEBI:59789"/>
    </ligand>
</feature>
<feature type="binding site" evidence="1">
    <location>
        <position position="209"/>
    </location>
    <ligand>
        <name>S-adenosyl-L-methionine</name>
        <dbReference type="ChEBI" id="CHEBI:59789"/>
    </ligand>
</feature>
<feature type="binding site" evidence="1">
    <location>
        <begin position="232"/>
        <end position="234"/>
    </location>
    <ligand>
        <name>S-adenosyl-L-methionine</name>
        <dbReference type="ChEBI" id="CHEBI:59789"/>
    </ligand>
</feature>
<feature type="binding site" evidence="1">
    <location>
        <position position="308"/>
    </location>
    <ligand>
        <name>S-adenosyl-L-methionine</name>
        <dbReference type="ChEBI" id="CHEBI:59789"/>
    </ligand>
</feature>
<feature type="disulfide bond" description="(transient)" evidence="1">
    <location>
        <begin position="120"/>
        <end position="351"/>
    </location>
</feature>
<gene>
    <name evidence="1" type="primary">rlmN</name>
    <name type="ordered locus">HH_1178</name>
</gene>
<keyword id="KW-0004">4Fe-4S</keyword>
<keyword id="KW-0963">Cytoplasm</keyword>
<keyword id="KW-1015">Disulfide bond</keyword>
<keyword id="KW-0408">Iron</keyword>
<keyword id="KW-0411">Iron-sulfur</keyword>
<keyword id="KW-0479">Metal-binding</keyword>
<keyword id="KW-0489">Methyltransferase</keyword>
<keyword id="KW-1185">Reference proteome</keyword>
<keyword id="KW-0698">rRNA processing</keyword>
<keyword id="KW-0949">S-adenosyl-L-methionine</keyword>
<keyword id="KW-0808">Transferase</keyword>
<keyword id="KW-0819">tRNA processing</keyword>
<organism>
    <name type="scientific">Helicobacter hepaticus (strain ATCC 51449 / 3B1)</name>
    <dbReference type="NCBI Taxonomy" id="235279"/>
    <lineage>
        <taxon>Bacteria</taxon>
        <taxon>Pseudomonadati</taxon>
        <taxon>Campylobacterota</taxon>
        <taxon>Epsilonproteobacteria</taxon>
        <taxon>Campylobacterales</taxon>
        <taxon>Helicobacteraceae</taxon>
        <taxon>Helicobacter</taxon>
    </lineage>
</organism>
<evidence type="ECO:0000255" key="1">
    <source>
        <dbReference type="HAMAP-Rule" id="MF_01849"/>
    </source>
</evidence>
<evidence type="ECO:0000255" key="2">
    <source>
        <dbReference type="PROSITE-ProRule" id="PRU01266"/>
    </source>
</evidence>